<organism>
    <name type="scientific">Limosilactobacillus fermentum (strain NBRC 3956 / LMG 18251)</name>
    <name type="common">Lactobacillus fermentum</name>
    <dbReference type="NCBI Taxonomy" id="334390"/>
    <lineage>
        <taxon>Bacteria</taxon>
        <taxon>Bacillati</taxon>
        <taxon>Bacillota</taxon>
        <taxon>Bacilli</taxon>
        <taxon>Lactobacillales</taxon>
        <taxon>Lactobacillaceae</taxon>
        <taxon>Limosilactobacillus</taxon>
    </lineage>
</organism>
<comment type="catalytic activity">
    <reaction evidence="1">
        <text>L-histidinol phosphate + 2-oxoglutarate = 3-(imidazol-4-yl)-2-oxopropyl phosphate + L-glutamate</text>
        <dbReference type="Rhea" id="RHEA:23744"/>
        <dbReference type="ChEBI" id="CHEBI:16810"/>
        <dbReference type="ChEBI" id="CHEBI:29985"/>
        <dbReference type="ChEBI" id="CHEBI:57766"/>
        <dbReference type="ChEBI" id="CHEBI:57980"/>
        <dbReference type="EC" id="2.6.1.9"/>
    </reaction>
</comment>
<comment type="cofactor">
    <cofactor evidence="1">
        <name>pyridoxal 5'-phosphate</name>
        <dbReference type="ChEBI" id="CHEBI:597326"/>
    </cofactor>
</comment>
<comment type="pathway">
    <text evidence="1">Amino-acid biosynthesis; L-histidine biosynthesis; L-histidine from 5-phospho-alpha-D-ribose 1-diphosphate: step 7/9.</text>
</comment>
<comment type="subunit">
    <text evidence="1">Homodimer.</text>
</comment>
<comment type="similarity">
    <text evidence="1">Belongs to the class-II pyridoxal-phosphate-dependent aminotransferase family. Histidinol-phosphate aminotransferase subfamily.</text>
</comment>
<evidence type="ECO:0000255" key="1">
    <source>
        <dbReference type="HAMAP-Rule" id="MF_01023"/>
    </source>
</evidence>
<protein>
    <recommendedName>
        <fullName evidence="1">Histidinol-phosphate aminotransferase</fullName>
        <ecNumber evidence="1">2.6.1.9</ecNumber>
    </recommendedName>
    <alternativeName>
        <fullName evidence="1">Imidazole acetol-phosphate transaminase</fullName>
    </alternativeName>
</protein>
<name>HIS8_LIMF3</name>
<proteinExistence type="inferred from homology"/>
<keyword id="KW-0028">Amino-acid biosynthesis</keyword>
<keyword id="KW-0032">Aminotransferase</keyword>
<keyword id="KW-0368">Histidine biosynthesis</keyword>
<keyword id="KW-0663">Pyridoxal phosphate</keyword>
<keyword id="KW-1185">Reference proteome</keyword>
<keyword id="KW-0808">Transferase</keyword>
<dbReference type="EC" id="2.6.1.9" evidence="1"/>
<dbReference type="EMBL" id="AP008937">
    <property type="protein sequence ID" value="BAG27100.1"/>
    <property type="molecule type" value="Genomic_DNA"/>
</dbReference>
<dbReference type="RefSeq" id="WP_012391119.1">
    <property type="nucleotide sequence ID" value="NC_010610.1"/>
</dbReference>
<dbReference type="SMR" id="B2GBR8"/>
<dbReference type="KEGG" id="lfe:LAF_0764"/>
<dbReference type="PATRIC" id="fig|334390.5.peg.836"/>
<dbReference type="eggNOG" id="COG0079">
    <property type="taxonomic scope" value="Bacteria"/>
</dbReference>
<dbReference type="HOGENOM" id="CLU_017584_3_3_9"/>
<dbReference type="UniPathway" id="UPA00031">
    <property type="reaction ID" value="UER00012"/>
</dbReference>
<dbReference type="Proteomes" id="UP000001697">
    <property type="component" value="Chromosome"/>
</dbReference>
<dbReference type="GO" id="GO:0004400">
    <property type="term" value="F:histidinol-phosphate transaminase activity"/>
    <property type="evidence" value="ECO:0007669"/>
    <property type="project" value="UniProtKB-UniRule"/>
</dbReference>
<dbReference type="GO" id="GO:0030170">
    <property type="term" value="F:pyridoxal phosphate binding"/>
    <property type="evidence" value="ECO:0007669"/>
    <property type="project" value="InterPro"/>
</dbReference>
<dbReference type="GO" id="GO:0000105">
    <property type="term" value="P:L-histidine biosynthetic process"/>
    <property type="evidence" value="ECO:0007669"/>
    <property type="project" value="UniProtKB-UniRule"/>
</dbReference>
<dbReference type="CDD" id="cd00609">
    <property type="entry name" value="AAT_like"/>
    <property type="match status" value="1"/>
</dbReference>
<dbReference type="Gene3D" id="3.90.1150.10">
    <property type="entry name" value="Aspartate Aminotransferase, domain 1"/>
    <property type="match status" value="1"/>
</dbReference>
<dbReference type="Gene3D" id="3.40.640.10">
    <property type="entry name" value="Type I PLP-dependent aspartate aminotransferase-like (Major domain)"/>
    <property type="match status" value="1"/>
</dbReference>
<dbReference type="HAMAP" id="MF_01023">
    <property type="entry name" value="HisC_aminotrans_2"/>
    <property type="match status" value="1"/>
</dbReference>
<dbReference type="InterPro" id="IPR004839">
    <property type="entry name" value="Aminotransferase_I/II_large"/>
</dbReference>
<dbReference type="InterPro" id="IPR005861">
    <property type="entry name" value="HisP_aminotrans"/>
</dbReference>
<dbReference type="InterPro" id="IPR050106">
    <property type="entry name" value="HistidinolP_aminotransfase"/>
</dbReference>
<dbReference type="InterPro" id="IPR015424">
    <property type="entry name" value="PyrdxlP-dep_Trfase"/>
</dbReference>
<dbReference type="InterPro" id="IPR015421">
    <property type="entry name" value="PyrdxlP-dep_Trfase_major"/>
</dbReference>
<dbReference type="InterPro" id="IPR015422">
    <property type="entry name" value="PyrdxlP-dep_Trfase_small"/>
</dbReference>
<dbReference type="NCBIfam" id="TIGR01141">
    <property type="entry name" value="hisC"/>
    <property type="match status" value="1"/>
</dbReference>
<dbReference type="PANTHER" id="PTHR43643:SF3">
    <property type="entry name" value="HISTIDINOL-PHOSPHATE AMINOTRANSFERASE"/>
    <property type="match status" value="1"/>
</dbReference>
<dbReference type="PANTHER" id="PTHR43643">
    <property type="entry name" value="HISTIDINOL-PHOSPHATE AMINOTRANSFERASE 2"/>
    <property type="match status" value="1"/>
</dbReference>
<dbReference type="Pfam" id="PF00155">
    <property type="entry name" value="Aminotran_1_2"/>
    <property type="match status" value="1"/>
</dbReference>
<dbReference type="SUPFAM" id="SSF53383">
    <property type="entry name" value="PLP-dependent transferases"/>
    <property type="match status" value="1"/>
</dbReference>
<feature type="chain" id="PRO_1000135405" description="Histidinol-phosphate aminotransferase">
    <location>
        <begin position="1"/>
        <end position="361"/>
    </location>
</feature>
<feature type="modified residue" description="N6-(pyridoxal phosphate)lysine" evidence="1">
    <location>
        <position position="224"/>
    </location>
</feature>
<sequence>MKAGINQIQSYVPEEPVQRVKSKYHLKRLARLSANENPYGTSPLVKEALINAINDGALNRYPDGDASELRALVGQQLNVAGDQLVFGVGLDEIIELVARAFLTPDDQVVVAKPAFSEYALHATVEGAAVKEVPVNPATGHFDFAGALAVINEATRLVWICNPNNPTGVLESPQAIEDFVRQVPKDTLVFIDEAYLDFADDPAKATCLPLVKRYQNVAVLRTLSKAYGLANVRVGFAVMPVALAAILQKIRLPYNLNTLAQVAAVAALRDQDFVKEAAAKNTVERAKWEDFFDQQGVKYFKSQANFIYFTVKNAADLAQTLLEKGFQVRRHLQPDWLRLTIGPAEDTTVMQALVADWLKQQA</sequence>
<reference key="1">
    <citation type="journal article" date="2008" name="DNA Res.">
        <title>Comparative genome analysis of Lactobacillus reuteri and Lactobacillus fermentum reveal a genomic island for reuterin and cobalamin production.</title>
        <authorList>
            <person name="Morita H."/>
            <person name="Toh H."/>
            <person name="Fukuda S."/>
            <person name="Horikawa H."/>
            <person name="Oshima K."/>
            <person name="Suzuki T."/>
            <person name="Murakami M."/>
            <person name="Hisamatsu S."/>
            <person name="Kato Y."/>
            <person name="Takizawa T."/>
            <person name="Fukuoka H."/>
            <person name="Yoshimura T."/>
            <person name="Itoh K."/>
            <person name="O'Sullivan D.J."/>
            <person name="McKay L.L."/>
            <person name="Ohno H."/>
            <person name="Kikuchi J."/>
            <person name="Masaoka T."/>
            <person name="Hattori M."/>
        </authorList>
    </citation>
    <scope>NUCLEOTIDE SEQUENCE [LARGE SCALE GENOMIC DNA]</scope>
    <source>
        <strain>NBRC 3956 / LMG 18251</strain>
    </source>
</reference>
<gene>
    <name evidence="1" type="primary">hisC</name>
    <name type="ordered locus">LAF_0764</name>
</gene>
<accession>B2GBR8</accession>